<keyword id="KW-0131">Cell cycle</keyword>
<keyword id="KW-0132">Cell division</keyword>
<keyword id="KW-0574">Periplasm</keyword>
<keyword id="KW-1185">Reference proteome</keyword>
<keyword id="KW-0732">Signal</keyword>
<sequence>MLKRWILTLFVVCLGFSQVAKAELELVITEGIDSARPIGIVPFKWHGEGKLPQDISAIISSDLQRSGKFSPVATNKMPQTPYKDSDINYEAWTKMGVDAIVTGEVKLNAQGKYEVTYKLIDVVRGQLTKGQSKALDESGKLVLTRDHILVNKVASLSTKQLRKYAHRISDVVYEKLTGERGAFLTRIAYVVVNDKAQYPYQLRIADYDGYNERLVLKSKQPIMSPAWSPDGKKLAYVSFENRKSQIFIMNIYTGKRELIASYPRHNGAPRFSHDGDKLAIVLSKSGSLQIYVVDLKTKKMSQITRGRANNTEPFWAPDNKSLIFTSDRGGKPQIYRVNLGDGSTKRLTWQGSQNLGGQITPDGKYIVMVNRSETGFNLAKQDLETGAVQVLTKTLLDESPSIAPNGGMVIYSSIYRKQNVLSMVSIDGRFKARLPATNGRVRAPAWSPFL</sequence>
<dbReference type="EMBL" id="CP000020">
    <property type="protein sequence ID" value="AAW85457.1"/>
    <property type="molecule type" value="Genomic_DNA"/>
</dbReference>
<dbReference type="RefSeq" id="WP_011261601.1">
    <property type="nucleotide sequence ID" value="NC_006840.2"/>
</dbReference>
<dbReference type="RefSeq" id="YP_204345.1">
    <property type="nucleotide sequence ID" value="NC_006840.2"/>
</dbReference>
<dbReference type="SMR" id="Q5E689"/>
<dbReference type="STRING" id="312309.VF_0962"/>
<dbReference type="EnsemblBacteria" id="AAW85457">
    <property type="protein sequence ID" value="AAW85457"/>
    <property type="gene ID" value="VF_0962"/>
</dbReference>
<dbReference type="GeneID" id="54163631"/>
<dbReference type="KEGG" id="vfi:VF_0962"/>
<dbReference type="PATRIC" id="fig|312309.11.peg.959"/>
<dbReference type="eggNOG" id="COG0823">
    <property type="taxonomic scope" value="Bacteria"/>
</dbReference>
<dbReference type="HOGENOM" id="CLU_047123_0_0_6"/>
<dbReference type="OrthoDB" id="9802240at2"/>
<dbReference type="Proteomes" id="UP000000537">
    <property type="component" value="Chromosome I"/>
</dbReference>
<dbReference type="GO" id="GO:0042597">
    <property type="term" value="C:periplasmic space"/>
    <property type="evidence" value="ECO:0007669"/>
    <property type="project" value="UniProtKB-SubCell"/>
</dbReference>
<dbReference type="GO" id="GO:0051301">
    <property type="term" value="P:cell division"/>
    <property type="evidence" value="ECO:0007669"/>
    <property type="project" value="UniProtKB-UniRule"/>
</dbReference>
<dbReference type="GO" id="GO:0017038">
    <property type="term" value="P:protein import"/>
    <property type="evidence" value="ECO:0007669"/>
    <property type="project" value="InterPro"/>
</dbReference>
<dbReference type="Gene3D" id="2.120.10.30">
    <property type="entry name" value="TolB, C-terminal domain"/>
    <property type="match status" value="1"/>
</dbReference>
<dbReference type="Gene3D" id="3.40.50.10070">
    <property type="entry name" value="TolB, N-terminal domain"/>
    <property type="match status" value="1"/>
</dbReference>
<dbReference type="HAMAP" id="MF_00671">
    <property type="entry name" value="TolB"/>
    <property type="match status" value="1"/>
</dbReference>
<dbReference type="InterPro" id="IPR011042">
    <property type="entry name" value="6-blade_b-propeller_TolB-like"/>
</dbReference>
<dbReference type="InterPro" id="IPR011659">
    <property type="entry name" value="PD40"/>
</dbReference>
<dbReference type="InterPro" id="IPR014167">
    <property type="entry name" value="Tol-Pal_TolB"/>
</dbReference>
<dbReference type="InterPro" id="IPR007195">
    <property type="entry name" value="TolB_N"/>
</dbReference>
<dbReference type="NCBIfam" id="TIGR02800">
    <property type="entry name" value="propeller_TolB"/>
    <property type="match status" value="1"/>
</dbReference>
<dbReference type="PANTHER" id="PTHR36842:SF1">
    <property type="entry name" value="PROTEIN TOLB"/>
    <property type="match status" value="1"/>
</dbReference>
<dbReference type="PANTHER" id="PTHR36842">
    <property type="entry name" value="PROTEIN TOLB HOMOLOG"/>
    <property type="match status" value="1"/>
</dbReference>
<dbReference type="Pfam" id="PF07676">
    <property type="entry name" value="PD40"/>
    <property type="match status" value="3"/>
</dbReference>
<dbReference type="Pfam" id="PF04052">
    <property type="entry name" value="TolB_N"/>
    <property type="match status" value="1"/>
</dbReference>
<dbReference type="SUPFAM" id="SSF52964">
    <property type="entry name" value="TolB, N-terminal domain"/>
    <property type="match status" value="1"/>
</dbReference>
<dbReference type="SUPFAM" id="SSF69304">
    <property type="entry name" value="Tricorn protease N-terminal domain"/>
    <property type="match status" value="1"/>
</dbReference>
<evidence type="ECO:0000255" key="1">
    <source>
        <dbReference type="HAMAP-Rule" id="MF_00671"/>
    </source>
</evidence>
<name>TOLB_ALIF1</name>
<proteinExistence type="inferred from homology"/>
<reference key="1">
    <citation type="journal article" date="2005" name="Proc. Natl. Acad. Sci. U.S.A.">
        <title>Complete genome sequence of Vibrio fischeri: a symbiotic bacterium with pathogenic congeners.</title>
        <authorList>
            <person name="Ruby E.G."/>
            <person name="Urbanowski M."/>
            <person name="Campbell J."/>
            <person name="Dunn A."/>
            <person name="Faini M."/>
            <person name="Gunsalus R."/>
            <person name="Lostroh P."/>
            <person name="Lupp C."/>
            <person name="McCann J."/>
            <person name="Millikan D."/>
            <person name="Schaefer A."/>
            <person name="Stabb E."/>
            <person name="Stevens A."/>
            <person name="Visick K."/>
            <person name="Whistler C."/>
            <person name="Greenberg E.P."/>
        </authorList>
    </citation>
    <scope>NUCLEOTIDE SEQUENCE [LARGE SCALE GENOMIC DNA]</scope>
    <source>
        <strain>ATCC 700601 / ES114</strain>
    </source>
</reference>
<protein>
    <recommendedName>
        <fullName evidence="1">Tol-Pal system protein TolB</fullName>
    </recommendedName>
</protein>
<organism>
    <name type="scientific">Aliivibrio fischeri (strain ATCC 700601 / ES114)</name>
    <name type="common">Vibrio fischeri</name>
    <dbReference type="NCBI Taxonomy" id="312309"/>
    <lineage>
        <taxon>Bacteria</taxon>
        <taxon>Pseudomonadati</taxon>
        <taxon>Pseudomonadota</taxon>
        <taxon>Gammaproteobacteria</taxon>
        <taxon>Vibrionales</taxon>
        <taxon>Vibrionaceae</taxon>
        <taxon>Aliivibrio</taxon>
    </lineage>
</organism>
<accession>Q5E689</accession>
<feature type="signal peptide" evidence="1">
    <location>
        <begin position="1"/>
        <end position="22"/>
    </location>
</feature>
<feature type="chain" id="PRO_0000034690" description="Tol-Pal system protein TolB" evidence="1">
    <location>
        <begin position="23"/>
        <end position="450"/>
    </location>
</feature>
<comment type="function">
    <text evidence="1">Part of the Tol-Pal system, which plays a role in outer membrane invagination during cell division and is important for maintaining outer membrane integrity.</text>
</comment>
<comment type="subunit">
    <text evidence="1">The Tol-Pal system is composed of five core proteins: the inner membrane proteins TolA, TolQ and TolR, the periplasmic protein TolB and the outer membrane protein Pal. They form a network linking the inner and outer membranes and the peptidoglycan layer.</text>
</comment>
<comment type="subcellular location">
    <subcellularLocation>
        <location evidence="1">Periplasm</location>
    </subcellularLocation>
</comment>
<comment type="similarity">
    <text evidence="1">Belongs to the TolB family.</text>
</comment>
<gene>
    <name evidence="1" type="primary">tolB</name>
    <name type="ordered locus">VF_0962</name>
</gene>